<feature type="chain" id="PRO_0000221506" description="Protein Tlp homolog">
    <location>
        <begin position="1"/>
        <end position="84"/>
    </location>
</feature>
<feature type="region of interest" description="Disordered" evidence="2">
    <location>
        <begin position="1"/>
        <end position="20"/>
    </location>
</feature>
<proteinExistence type="inferred from homology"/>
<accession>Q8RCT2</accession>
<reference key="1">
    <citation type="journal article" date="2002" name="Genome Res.">
        <title>A complete sequence of the T. tengcongensis genome.</title>
        <authorList>
            <person name="Bao Q."/>
            <person name="Tian Y."/>
            <person name="Li W."/>
            <person name="Xu Z."/>
            <person name="Xuan Z."/>
            <person name="Hu S."/>
            <person name="Dong W."/>
            <person name="Yang J."/>
            <person name="Chen Y."/>
            <person name="Xue Y."/>
            <person name="Xu Y."/>
            <person name="Lai X."/>
            <person name="Huang L."/>
            <person name="Dong X."/>
            <person name="Ma Y."/>
            <person name="Ling L."/>
            <person name="Tan H."/>
            <person name="Chen R."/>
            <person name="Wang J."/>
            <person name="Yu J."/>
            <person name="Yang H."/>
        </authorList>
    </citation>
    <scope>NUCLEOTIDE SEQUENCE [LARGE SCALE GENOMIC DNA]</scope>
    <source>
        <strain>DSM 15242 / JCM 11007 / NBRC 100824 / MB4</strain>
    </source>
</reference>
<protein>
    <recommendedName>
        <fullName evidence="1">Protein Tlp homolog</fullName>
    </recommendedName>
</protein>
<evidence type="ECO:0000255" key="1">
    <source>
        <dbReference type="HAMAP-Rule" id="MF_01506"/>
    </source>
</evidence>
<evidence type="ECO:0000256" key="2">
    <source>
        <dbReference type="SAM" id="MobiDB-lite"/>
    </source>
</evidence>
<dbReference type="EMBL" id="AE008691">
    <property type="protein sequence ID" value="AAM23620.1"/>
    <property type="molecule type" value="Genomic_DNA"/>
</dbReference>
<dbReference type="RefSeq" id="WP_011024784.1">
    <property type="nucleotide sequence ID" value="NC_003869.1"/>
</dbReference>
<dbReference type="SMR" id="Q8RCT2"/>
<dbReference type="STRING" id="273068.TTE0328"/>
<dbReference type="KEGG" id="tte:TTE0328"/>
<dbReference type="eggNOG" id="ENOG50330RR">
    <property type="taxonomic scope" value="Bacteria"/>
</dbReference>
<dbReference type="HOGENOM" id="CLU_178266_0_0_9"/>
<dbReference type="OrthoDB" id="1799076at2"/>
<dbReference type="Proteomes" id="UP000000555">
    <property type="component" value="Chromosome"/>
</dbReference>
<dbReference type="HAMAP" id="MF_01506">
    <property type="entry name" value="Tlp"/>
    <property type="match status" value="1"/>
</dbReference>
<dbReference type="InterPro" id="IPR017524">
    <property type="entry name" value="SASP_thioredoxin-like"/>
</dbReference>
<dbReference type="NCBIfam" id="TIGR03090">
    <property type="entry name" value="SASP_tlp"/>
    <property type="match status" value="1"/>
</dbReference>
<dbReference type="Pfam" id="PF19824">
    <property type="entry name" value="Tlp"/>
    <property type="match status" value="1"/>
</dbReference>
<keyword id="KW-1185">Reference proteome</keyword>
<gene>
    <name evidence="1" type="primary">tlp</name>
    <name type="ordered locus">TTE0328</name>
</gene>
<sequence length="84" mass="10349">MGKEERYTKKPKPDDRSDNVEKLQEMIHNTIENYREAEDYLKLHAEELSPEEIERIKEKNRNRLISIQNMRQEIIDEVHDRERR</sequence>
<organism>
    <name type="scientific">Caldanaerobacter subterraneus subsp. tengcongensis (strain DSM 15242 / JCM 11007 / NBRC 100824 / MB4)</name>
    <name type="common">Thermoanaerobacter tengcongensis</name>
    <dbReference type="NCBI Taxonomy" id="273068"/>
    <lineage>
        <taxon>Bacteria</taxon>
        <taxon>Bacillati</taxon>
        <taxon>Bacillota</taxon>
        <taxon>Clostridia</taxon>
        <taxon>Thermoanaerobacterales</taxon>
        <taxon>Thermoanaerobacteraceae</taxon>
        <taxon>Caldanaerobacter</taxon>
    </lineage>
</organism>
<name>TLP_CALS4</name>
<comment type="similarity">
    <text evidence="1">Belongs to the Tlp family.</text>
</comment>